<reference key="1">
    <citation type="journal article" date="2008" name="J. Bacteriol.">
        <title>Comparative genome sequence analysis of multidrug-resistant Acinetobacter baumannii.</title>
        <authorList>
            <person name="Adams M.D."/>
            <person name="Goglin K."/>
            <person name="Molyneaux N."/>
            <person name="Hujer K.M."/>
            <person name="Lavender H."/>
            <person name="Jamison J.J."/>
            <person name="MacDonald I.J."/>
            <person name="Martin K.M."/>
            <person name="Russo T."/>
            <person name="Campagnari A.A."/>
            <person name="Hujer A.M."/>
            <person name="Bonomo R.A."/>
            <person name="Gill S.R."/>
        </authorList>
    </citation>
    <scope>NUCLEOTIDE SEQUENCE [LARGE SCALE GENOMIC DNA]</scope>
    <source>
        <strain>AB307-0294</strain>
    </source>
</reference>
<accession>B7GYV2</accession>
<proteinExistence type="inferred from homology"/>
<comment type="function">
    <text evidence="1">Catalyzes the transfer of a phosphate group to glutamate to form L-glutamate 5-phosphate.</text>
</comment>
<comment type="catalytic activity">
    <reaction evidence="1">
        <text>L-glutamate + ATP = L-glutamyl 5-phosphate + ADP</text>
        <dbReference type="Rhea" id="RHEA:14877"/>
        <dbReference type="ChEBI" id="CHEBI:29985"/>
        <dbReference type="ChEBI" id="CHEBI:30616"/>
        <dbReference type="ChEBI" id="CHEBI:58274"/>
        <dbReference type="ChEBI" id="CHEBI:456216"/>
        <dbReference type="EC" id="2.7.2.11"/>
    </reaction>
</comment>
<comment type="pathway">
    <text evidence="1">Amino-acid biosynthesis; L-proline biosynthesis; L-glutamate 5-semialdehyde from L-glutamate: step 1/2.</text>
</comment>
<comment type="subcellular location">
    <subcellularLocation>
        <location evidence="1">Cytoplasm</location>
    </subcellularLocation>
</comment>
<comment type="similarity">
    <text evidence="1">Belongs to the glutamate 5-kinase family.</text>
</comment>
<protein>
    <recommendedName>
        <fullName evidence="1">Glutamate 5-kinase</fullName>
        <ecNumber evidence="1">2.7.2.11</ecNumber>
    </recommendedName>
    <alternativeName>
        <fullName evidence="1">Gamma-glutamyl kinase</fullName>
        <shortName evidence="1">GK</shortName>
    </alternativeName>
</protein>
<dbReference type="EC" id="2.7.2.11" evidence="1"/>
<dbReference type="EMBL" id="CP001172">
    <property type="protein sequence ID" value="ACJ57838.1"/>
    <property type="molecule type" value="Genomic_DNA"/>
</dbReference>
<dbReference type="RefSeq" id="WP_000573844.1">
    <property type="nucleotide sequence ID" value="NZ_CP001172.1"/>
</dbReference>
<dbReference type="SMR" id="B7GYV2"/>
<dbReference type="GeneID" id="92894804"/>
<dbReference type="HOGENOM" id="CLU_025400_2_0_6"/>
<dbReference type="UniPathway" id="UPA00098">
    <property type="reaction ID" value="UER00359"/>
</dbReference>
<dbReference type="Proteomes" id="UP000006924">
    <property type="component" value="Chromosome"/>
</dbReference>
<dbReference type="GO" id="GO:0005829">
    <property type="term" value="C:cytosol"/>
    <property type="evidence" value="ECO:0007669"/>
    <property type="project" value="TreeGrafter"/>
</dbReference>
<dbReference type="GO" id="GO:0005524">
    <property type="term" value="F:ATP binding"/>
    <property type="evidence" value="ECO:0007669"/>
    <property type="project" value="UniProtKB-KW"/>
</dbReference>
<dbReference type="GO" id="GO:0004349">
    <property type="term" value="F:glutamate 5-kinase activity"/>
    <property type="evidence" value="ECO:0007669"/>
    <property type="project" value="UniProtKB-UniRule"/>
</dbReference>
<dbReference type="GO" id="GO:0003723">
    <property type="term" value="F:RNA binding"/>
    <property type="evidence" value="ECO:0007669"/>
    <property type="project" value="InterPro"/>
</dbReference>
<dbReference type="GO" id="GO:0055129">
    <property type="term" value="P:L-proline biosynthetic process"/>
    <property type="evidence" value="ECO:0007669"/>
    <property type="project" value="UniProtKB-UniRule"/>
</dbReference>
<dbReference type="CDD" id="cd04242">
    <property type="entry name" value="AAK_G5K_ProB"/>
    <property type="match status" value="1"/>
</dbReference>
<dbReference type="CDD" id="cd21157">
    <property type="entry name" value="PUA_G5K"/>
    <property type="match status" value="1"/>
</dbReference>
<dbReference type="FunFam" id="3.40.1160.10:FF:000018">
    <property type="entry name" value="Glutamate 5-kinase"/>
    <property type="match status" value="1"/>
</dbReference>
<dbReference type="Gene3D" id="3.40.1160.10">
    <property type="entry name" value="Acetylglutamate kinase-like"/>
    <property type="match status" value="2"/>
</dbReference>
<dbReference type="Gene3D" id="2.30.130.10">
    <property type="entry name" value="PUA domain"/>
    <property type="match status" value="1"/>
</dbReference>
<dbReference type="HAMAP" id="MF_00456">
    <property type="entry name" value="ProB"/>
    <property type="match status" value="1"/>
</dbReference>
<dbReference type="InterPro" id="IPR036393">
    <property type="entry name" value="AceGlu_kinase-like_sf"/>
</dbReference>
<dbReference type="InterPro" id="IPR001048">
    <property type="entry name" value="Asp/Glu/Uridylate_kinase"/>
</dbReference>
<dbReference type="InterPro" id="IPR041739">
    <property type="entry name" value="G5K_ProB"/>
</dbReference>
<dbReference type="InterPro" id="IPR001057">
    <property type="entry name" value="Glu/AcGlu_kinase"/>
</dbReference>
<dbReference type="InterPro" id="IPR011529">
    <property type="entry name" value="Glu_5kinase"/>
</dbReference>
<dbReference type="InterPro" id="IPR005715">
    <property type="entry name" value="Glu_5kinase/COase_Synthase"/>
</dbReference>
<dbReference type="InterPro" id="IPR019797">
    <property type="entry name" value="Glutamate_5-kinase_CS"/>
</dbReference>
<dbReference type="InterPro" id="IPR002478">
    <property type="entry name" value="PUA"/>
</dbReference>
<dbReference type="InterPro" id="IPR015947">
    <property type="entry name" value="PUA-like_sf"/>
</dbReference>
<dbReference type="InterPro" id="IPR036974">
    <property type="entry name" value="PUA_sf"/>
</dbReference>
<dbReference type="NCBIfam" id="TIGR01027">
    <property type="entry name" value="proB"/>
    <property type="match status" value="1"/>
</dbReference>
<dbReference type="PANTHER" id="PTHR43654">
    <property type="entry name" value="GLUTAMATE 5-KINASE"/>
    <property type="match status" value="1"/>
</dbReference>
<dbReference type="PANTHER" id="PTHR43654:SF1">
    <property type="entry name" value="ISOPENTENYL PHOSPHATE KINASE"/>
    <property type="match status" value="1"/>
</dbReference>
<dbReference type="Pfam" id="PF00696">
    <property type="entry name" value="AA_kinase"/>
    <property type="match status" value="1"/>
</dbReference>
<dbReference type="Pfam" id="PF01472">
    <property type="entry name" value="PUA"/>
    <property type="match status" value="1"/>
</dbReference>
<dbReference type="PIRSF" id="PIRSF000729">
    <property type="entry name" value="GK"/>
    <property type="match status" value="1"/>
</dbReference>
<dbReference type="PRINTS" id="PR00474">
    <property type="entry name" value="GLU5KINASE"/>
</dbReference>
<dbReference type="SMART" id="SM00359">
    <property type="entry name" value="PUA"/>
    <property type="match status" value="1"/>
</dbReference>
<dbReference type="SUPFAM" id="SSF53633">
    <property type="entry name" value="Carbamate kinase-like"/>
    <property type="match status" value="1"/>
</dbReference>
<dbReference type="SUPFAM" id="SSF88697">
    <property type="entry name" value="PUA domain-like"/>
    <property type="match status" value="1"/>
</dbReference>
<dbReference type="PROSITE" id="PS00902">
    <property type="entry name" value="GLUTAMATE_5_KINASE"/>
    <property type="match status" value="1"/>
</dbReference>
<dbReference type="PROSITE" id="PS50890">
    <property type="entry name" value="PUA"/>
    <property type="match status" value="1"/>
</dbReference>
<organism>
    <name type="scientific">Acinetobacter baumannii (strain AB307-0294)</name>
    <dbReference type="NCBI Taxonomy" id="557600"/>
    <lineage>
        <taxon>Bacteria</taxon>
        <taxon>Pseudomonadati</taxon>
        <taxon>Pseudomonadota</taxon>
        <taxon>Gammaproteobacteria</taxon>
        <taxon>Moraxellales</taxon>
        <taxon>Moraxellaceae</taxon>
        <taxon>Acinetobacter</taxon>
        <taxon>Acinetobacter calcoaceticus/baumannii complex</taxon>
    </lineage>
</organism>
<sequence>MIEVVDGQRKLSECKRIVVKIGSSLLTANGQGLDLDAISHWAKQIADLHNAGHEIILVSSGAVAEGMVRMKLASRPTDLPSLQACAAIGQMGLIHTWSSVLENHSIRTAQVLLTHDDLADRRRYLNSCDALQNLIDWRVIPVINENDTVSTDEIRFGDNDTLAAMVAGQVHADLLIILTDQQGMFDSDPRHNPDAKLLSTVRAMDDVLFEMAGGGGVLGRGGMVTKVRAARLAAKSGCPTLIASGESDNVLSRVMAGEMLGTLFTTDKDRMTAHQQWLAAHLQTAGRLVIDDGAVEAIKLKHRSLLPVGVKTVEGHFDRGDVVECVDKQGKRVAVGRVNFSSRSAEIIKGLSSDKVYQVLGEARSLEMIHRDHMAIY</sequence>
<keyword id="KW-0028">Amino-acid biosynthesis</keyword>
<keyword id="KW-0067">ATP-binding</keyword>
<keyword id="KW-0963">Cytoplasm</keyword>
<keyword id="KW-0418">Kinase</keyword>
<keyword id="KW-0547">Nucleotide-binding</keyword>
<keyword id="KW-0641">Proline biosynthesis</keyword>
<keyword id="KW-0808">Transferase</keyword>
<gene>
    <name evidence="1" type="primary">proB</name>
    <name type="ordered locus">ABBFA_000949</name>
</gene>
<feature type="chain" id="PRO_1000125202" description="Glutamate 5-kinase">
    <location>
        <begin position="1"/>
        <end position="377"/>
    </location>
</feature>
<feature type="domain" description="PUA" evidence="1">
    <location>
        <begin position="285"/>
        <end position="363"/>
    </location>
</feature>
<feature type="binding site" evidence="1">
    <location>
        <position position="20"/>
    </location>
    <ligand>
        <name>ATP</name>
        <dbReference type="ChEBI" id="CHEBI:30616"/>
    </ligand>
</feature>
<feature type="binding site" evidence="1">
    <location>
        <position position="60"/>
    </location>
    <ligand>
        <name>substrate</name>
    </ligand>
</feature>
<feature type="binding site" evidence="1">
    <location>
        <position position="147"/>
    </location>
    <ligand>
        <name>substrate</name>
    </ligand>
</feature>
<feature type="binding site" evidence="1">
    <location>
        <position position="159"/>
    </location>
    <ligand>
        <name>substrate</name>
    </ligand>
</feature>
<feature type="binding site" evidence="1">
    <location>
        <begin position="179"/>
        <end position="180"/>
    </location>
    <ligand>
        <name>ATP</name>
        <dbReference type="ChEBI" id="CHEBI:30616"/>
    </ligand>
</feature>
<evidence type="ECO:0000255" key="1">
    <source>
        <dbReference type="HAMAP-Rule" id="MF_00456"/>
    </source>
</evidence>
<name>PROB_ACIB3</name>